<sequence>MSKLGTLGARLHHGEVGYDFVKNRKIWYGISILITITAIVGLAVRGLHMGIEFQGGAVFTTPKNMSASVAQTETWAEEASGHDAIVQKLGDGSLRIQIAGTDTQQSDQIKEDLSKNLDVSAEKINADLVGPSWGDQIANKAWQGLGIFMVLVVIYLAIAFEWRMALAAFVALIHDITITVGIYALVGFEVTPGTVIGLLTILGYSLYDTVVVFDSLKEQTRDITKQTRWTYAEIANRSINSTLVRSINTTVVALLPVAGLLFIGGGVLGAGMLNDISLSLFVGLAAGAYSSIFIATPLVADLKEAEPQMKALKKRVLAKRAQGAAKGESAESAADEGAYDADEPDDAAPAVVGPRNQPASRGRGRGRPSGKRR</sequence>
<accession>Q53956</accession>
<proteinExistence type="inferred from homology"/>
<dbReference type="EMBL" id="X85969">
    <property type="protein sequence ID" value="CAA59955.1"/>
    <property type="molecule type" value="Genomic_DNA"/>
</dbReference>
<dbReference type="EMBL" id="AL939109">
    <property type="protein sequence ID" value="CAB70917.1"/>
    <property type="molecule type" value="Genomic_DNA"/>
</dbReference>
<dbReference type="PIR" id="S52766">
    <property type="entry name" value="S52766"/>
</dbReference>
<dbReference type="RefSeq" id="NP_625794.1">
    <property type="nucleotide sequence ID" value="NC_003888.3"/>
</dbReference>
<dbReference type="RefSeq" id="WP_003977312.1">
    <property type="nucleotide sequence ID" value="NZ_VNID01000021.1"/>
</dbReference>
<dbReference type="SMR" id="Q53956"/>
<dbReference type="FunCoup" id="Q53956">
    <property type="interactions" value="24"/>
</dbReference>
<dbReference type="STRING" id="100226.gene:17759101"/>
<dbReference type="PaxDb" id="100226-SCO1515"/>
<dbReference type="GeneID" id="96651636"/>
<dbReference type="KEGG" id="sco:SCO1515"/>
<dbReference type="PATRIC" id="fig|100226.15.peg.1524"/>
<dbReference type="eggNOG" id="COG0341">
    <property type="taxonomic scope" value="Bacteria"/>
</dbReference>
<dbReference type="HOGENOM" id="CLU_050012_2_0_11"/>
<dbReference type="InParanoid" id="Q53956"/>
<dbReference type="OrthoDB" id="9774769at2"/>
<dbReference type="PhylomeDB" id="Q53956"/>
<dbReference type="Proteomes" id="UP000001973">
    <property type="component" value="Chromosome"/>
</dbReference>
<dbReference type="GO" id="GO:0005886">
    <property type="term" value="C:plasma membrane"/>
    <property type="evidence" value="ECO:0000318"/>
    <property type="project" value="GO_Central"/>
</dbReference>
<dbReference type="GO" id="GO:0015450">
    <property type="term" value="F:protein-transporting ATPase activity"/>
    <property type="evidence" value="ECO:0007669"/>
    <property type="project" value="InterPro"/>
</dbReference>
<dbReference type="GO" id="GO:0065002">
    <property type="term" value="P:intracellular protein transmembrane transport"/>
    <property type="evidence" value="ECO:0007669"/>
    <property type="project" value="UniProtKB-UniRule"/>
</dbReference>
<dbReference type="GO" id="GO:0006605">
    <property type="term" value="P:protein targeting"/>
    <property type="evidence" value="ECO:0007669"/>
    <property type="project" value="UniProtKB-UniRule"/>
</dbReference>
<dbReference type="GO" id="GO:0015031">
    <property type="term" value="P:protein transport"/>
    <property type="evidence" value="ECO:0000318"/>
    <property type="project" value="GO_Central"/>
</dbReference>
<dbReference type="GO" id="GO:0043952">
    <property type="term" value="P:protein transport by the Sec complex"/>
    <property type="evidence" value="ECO:0007669"/>
    <property type="project" value="UniProtKB-UniRule"/>
</dbReference>
<dbReference type="FunFam" id="1.20.1640.10:FF:000023">
    <property type="entry name" value="Protein-export membrane protein SecF"/>
    <property type="match status" value="1"/>
</dbReference>
<dbReference type="Gene3D" id="1.20.1640.10">
    <property type="entry name" value="Multidrug efflux transporter AcrB transmembrane domain"/>
    <property type="match status" value="1"/>
</dbReference>
<dbReference type="HAMAP" id="MF_01464_B">
    <property type="entry name" value="SecF_B"/>
    <property type="match status" value="1"/>
</dbReference>
<dbReference type="InterPro" id="IPR022813">
    <property type="entry name" value="SecD/SecF_arch_bac"/>
</dbReference>
<dbReference type="InterPro" id="IPR022645">
    <property type="entry name" value="SecD/SecF_bac"/>
</dbReference>
<dbReference type="InterPro" id="IPR022646">
    <property type="entry name" value="SecD/SecF_CS"/>
</dbReference>
<dbReference type="InterPro" id="IPR048634">
    <property type="entry name" value="SecD_SecF_C"/>
</dbReference>
<dbReference type="InterPro" id="IPR055344">
    <property type="entry name" value="SecD_SecF_C_bact"/>
</dbReference>
<dbReference type="InterPro" id="IPR005665">
    <property type="entry name" value="SecF_bac"/>
</dbReference>
<dbReference type="NCBIfam" id="TIGR00916">
    <property type="entry name" value="2A0604s01"/>
    <property type="match status" value="1"/>
</dbReference>
<dbReference type="NCBIfam" id="TIGR00966">
    <property type="entry name" value="transloc_SecF"/>
    <property type="match status" value="1"/>
</dbReference>
<dbReference type="PANTHER" id="PTHR30081:SF8">
    <property type="entry name" value="PROTEIN TRANSLOCASE SUBUNIT SECF"/>
    <property type="match status" value="1"/>
</dbReference>
<dbReference type="PANTHER" id="PTHR30081">
    <property type="entry name" value="PROTEIN-EXPORT MEMBRANE PROTEIN SEC"/>
    <property type="match status" value="1"/>
</dbReference>
<dbReference type="Pfam" id="PF07549">
    <property type="entry name" value="Sec_GG"/>
    <property type="match status" value="1"/>
</dbReference>
<dbReference type="Pfam" id="PF02355">
    <property type="entry name" value="SecD_SecF_C"/>
    <property type="match status" value="1"/>
</dbReference>
<dbReference type="PRINTS" id="PR01755">
    <property type="entry name" value="SECFTRNLCASE"/>
</dbReference>
<dbReference type="SUPFAM" id="SSF82866">
    <property type="entry name" value="Multidrug efflux transporter AcrB transmembrane domain"/>
    <property type="match status" value="1"/>
</dbReference>
<gene>
    <name evidence="1" type="primary">secF</name>
    <name type="ordered locus">SCO1515</name>
    <name type="ORF">SCL2.05c</name>
</gene>
<feature type="chain" id="PRO_0000095987" description="Protein translocase subunit SecF">
    <location>
        <begin position="1"/>
        <end position="373"/>
    </location>
</feature>
<feature type="transmembrane region" description="Helical" evidence="1">
    <location>
        <begin position="26"/>
        <end position="46"/>
    </location>
</feature>
<feature type="transmembrane region" description="Helical" evidence="1">
    <location>
        <begin position="142"/>
        <end position="162"/>
    </location>
</feature>
<feature type="transmembrane region" description="Helical" evidence="1">
    <location>
        <begin position="166"/>
        <end position="186"/>
    </location>
</feature>
<feature type="transmembrane region" description="Helical" evidence="1">
    <location>
        <begin position="193"/>
        <end position="213"/>
    </location>
</feature>
<feature type="transmembrane region" description="Helical" evidence="1">
    <location>
        <begin position="251"/>
        <end position="271"/>
    </location>
</feature>
<feature type="transmembrane region" description="Helical" evidence="1">
    <location>
        <begin position="280"/>
        <end position="300"/>
    </location>
</feature>
<feature type="region of interest" description="Disordered" evidence="2">
    <location>
        <begin position="322"/>
        <end position="373"/>
    </location>
</feature>
<feature type="compositionally biased region" description="Low complexity" evidence="2">
    <location>
        <begin position="322"/>
        <end position="332"/>
    </location>
</feature>
<feature type="compositionally biased region" description="Acidic residues" evidence="2">
    <location>
        <begin position="333"/>
        <end position="346"/>
    </location>
</feature>
<feature type="compositionally biased region" description="Basic residues" evidence="2">
    <location>
        <begin position="362"/>
        <end position="373"/>
    </location>
</feature>
<reference key="1">
    <citation type="submission" date="1995-03" db="EMBL/GenBank/DDBJ databases">
        <authorList>
            <person name="Loriaux A."/>
            <person name="Frare P."/>
            <person name="Brans A."/>
            <person name="Dusart J."/>
        </authorList>
    </citation>
    <scope>NUCLEOTIDE SEQUENCE [GENOMIC DNA]</scope>
    <source>
        <strain>A3(2) / NRRL B-16638</strain>
    </source>
</reference>
<reference key="2">
    <citation type="journal article" date="2002" name="Nature">
        <title>Complete genome sequence of the model actinomycete Streptomyces coelicolor A3(2).</title>
        <authorList>
            <person name="Bentley S.D."/>
            <person name="Chater K.F."/>
            <person name="Cerdeno-Tarraga A.-M."/>
            <person name="Challis G.L."/>
            <person name="Thomson N.R."/>
            <person name="James K.D."/>
            <person name="Harris D.E."/>
            <person name="Quail M.A."/>
            <person name="Kieser H."/>
            <person name="Harper D."/>
            <person name="Bateman A."/>
            <person name="Brown S."/>
            <person name="Chandra G."/>
            <person name="Chen C.W."/>
            <person name="Collins M."/>
            <person name="Cronin A."/>
            <person name="Fraser A."/>
            <person name="Goble A."/>
            <person name="Hidalgo J."/>
            <person name="Hornsby T."/>
            <person name="Howarth S."/>
            <person name="Huang C.-H."/>
            <person name="Kieser T."/>
            <person name="Larke L."/>
            <person name="Murphy L.D."/>
            <person name="Oliver K."/>
            <person name="O'Neil S."/>
            <person name="Rabbinowitsch E."/>
            <person name="Rajandream M.A."/>
            <person name="Rutherford K.M."/>
            <person name="Rutter S."/>
            <person name="Seeger K."/>
            <person name="Saunders D."/>
            <person name="Sharp S."/>
            <person name="Squares R."/>
            <person name="Squares S."/>
            <person name="Taylor K."/>
            <person name="Warren T."/>
            <person name="Wietzorrek A."/>
            <person name="Woodward J.R."/>
            <person name="Barrell B.G."/>
            <person name="Parkhill J."/>
            <person name="Hopwood D.A."/>
        </authorList>
    </citation>
    <scope>NUCLEOTIDE SEQUENCE [LARGE SCALE GENOMIC DNA]</scope>
    <source>
        <strain>ATCC BAA-471 / A3(2) / M145</strain>
    </source>
</reference>
<keyword id="KW-1003">Cell membrane</keyword>
<keyword id="KW-0472">Membrane</keyword>
<keyword id="KW-0653">Protein transport</keyword>
<keyword id="KW-1185">Reference proteome</keyword>
<keyword id="KW-0811">Translocation</keyword>
<keyword id="KW-0812">Transmembrane</keyword>
<keyword id="KW-1133">Transmembrane helix</keyword>
<keyword id="KW-0813">Transport</keyword>
<organism>
    <name type="scientific">Streptomyces coelicolor (strain ATCC BAA-471 / A3(2) / M145)</name>
    <dbReference type="NCBI Taxonomy" id="100226"/>
    <lineage>
        <taxon>Bacteria</taxon>
        <taxon>Bacillati</taxon>
        <taxon>Actinomycetota</taxon>
        <taxon>Actinomycetes</taxon>
        <taxon>Kitasatosporales</taxon>
        <taxon>Streptomycetaceae</taxon>
        <taxon>Streptomyces</taxon>
        <taxon>Streptomyces albidoflavus group</taxon>
    </lineage>
</organism>
<protein>
    <recommendedName>
        <fullName>Protein translocase subunit SecF</fullName>
    </recommendedName>
</protein>
<name>SECF_STRCO</name>
<comment type="function">
    <text evidence="1">Part of the Sec protein translocase complex. Interacts with the SecYEG preprotein conducting channel. SecDF uses the proton motive force (PMF) to complete protein translocation after the ATP-dependent function of SecA.</text>
</comment>
<comment type="subunit">
    <text evidence="1">Forms a complex with SecD. Part of the essential Sec protein translocation apparatus which comprises SecA, SecYEG and auxiliary proteins SecDF. Other proteins may also be involved.</text>
</comment>
<comment type="subcellular location">
    <subcellularLocation>
        <location evidence="1">Cell membrane</location>
        <topology evidence="1">Multi-pass membrane protein</topology>
    </subcellularLocation>
</comment>
<comment type="similarity">
    <text evidence="1">Belongs to the SecD/SecF family. SecF subfamily.</text>
</comment>
<evidence type="ECO:0000255" key="1">
    <source>
        <dbReference type="HAMAP-Rule" id="MF_01464"/>
    </source>
</evidence>
<evidence type="ECO:0000256" key="2">
    <source>
        <dbReference type="SAM" id="MobiDB-lite"/>
    </source>
</evidence>